<accession>B4TZ91</accession>
<proteinExistence type="inferred from homology"/>
<keyword id="KW-0028">Amino-acid biosynthesis</keyword>
<keyword id="KW-0963">Cytoplasm</keyword>
<keyword id="KW-0521">NADP</keyword>
<keyword id="KW-0560">Oxidoreductase</keyword>
<keyword id="KW-0641">Proline biosynthesis</keyword>
<dbReference type="EC" id="1.2.1.41" evidence="1"/>
<dbReference type="EMBL" id="CP001127">
    <property type="protein sequence ID" value="ACF91466.1"/>
    <property type="molecule type" value="Genomic_DNA"/>
</dbReference>
<dbReference type="RefSeq" id="WP_000893218.1">
    <property type="nucleotide sequence ID" value="NC_011094.1"/>
</dbReference>
<dbReference type="SMR" id="B4TZ91"/>
<dbReference type="KEGG" id="sew:SeSA_A0372"/>
<dbReference type="HOGENOM" id="CLU_030231_0_0_6"/>
<dbReference type="UniPathway" id="UPA00098">
    <property type="reaction ID" value="UER00360"/>
</dbReference>
<dbReference type="Proteomes" id="UP000001865">
    <property type="component" value="Chromosome"/>
</dbReference>
<dbReference type="GO" id="GO:0005737">
    <property type="term" value="C:cytoplasm"/>
    <property type="evidence" value="ECO:0007669"/>
    <property type="project" value="UniProtKB-SubCell"/>
</dbReference>
<dbReference type="GO" id="GO:0004350">
    <property type="term" value="F:glutamate-5-semialdehyde dehydrogenase activity"/>
    <property type="evidence" value="ECO:0007669"/>
    <property type="project" value="UniProtKB-UniRule"/>
</dbReference>
<dbReference type="GO" id="GO:0050661">
    <property type="term" value="F:NADP binding"/>
    <property type="evidence" value="ECO:0007669"/>
    <property type="project" value="InterPro"/>
</dbReference>
<dbReference type="GO" id="GO:0055129">
    <property type="term" value="P:L-proline biosynthetic process"/>
    <property type="evidence" value="ECO:0007669"/>
    <property type="project" value="UniProtKB-UniRule"/>
</dbReference>
<dbReference type="CDD" id="cd07079">
    <property type="entry name" value="ALDH_F18-19_ProA-GPR"/>
    <property type="match status" value="1"/>
</dbReference>
<dbReference type="FunFam" id="3.40.309.10:FF:000006">
    <property type="entry name" value="Gamma-glutamyl phosphate reductase"/>
    <property type="match status" value="1"/>
</dbReference>
<dbReference type="Gene3D" id="3.40.605.10">
    <property type="entry name" value="Aldehyde Dehydrogenase, Chain A, domain 1"/>
    <property type="match status" value="1"/>
</dbReference>
<dbReference type="Gene3D" id="3.40.309.10">
    <property type="entry name" value="Aldehyde Dehydrogenase, Chain A, domain 2"/>
    <property type="match status" value="1"/>
</dbReference>
<dbReference type="HAMAP" id="MF_00412">
    <property type="entry name" value="ProA"/>
    <property type="match status" value="1"/>
</dbReference>
<dbReference type="InterPro" id="IPR016161">
    <property type="entry name" value="Ald_DH/histidinol_DH"/>
</dbReference>
<dbReference type="InterPro" id="IPR016163">
    <property type="entry name" value="Ald_DH_C"/>
</dbReference>
<dbReference type="InterPro" id="IPR016162">
    <property type="entry name" value="Ald_DH_N"/>
</dbReference>
<dbReference type="InterPro" id="IPR015590">
    <property type="entry name" value="Aldehyde_DH_dom"/>
</dbReference>
<dbReference type="InterPro" id="IPR020593">
    <property type="entry name" value="G-glutamylP_reductase_CS"/>
</dbReference>
<dbReference type="InterPro" id="IPR012134">
    <property type="entry name" value="Glu-5-SA_DH"/>
</dbReference>
<dbReference type="InterPro" id="IPR000965">
    <property type="entry name" value="GPR_dom"/>
</dbReference>
<dbReference type="NCBIfam" id="NF001221">
    <property type="entry name" value="PRK00197.1"/>
    <property type="match status" value="1"/>
</dbReference>
<dbReference type="NCBIfam" id="TIGR00407">
    <property type="entry name" value="proA"/>
    <property type="match status" value="1"/>
</dbReference>
<dbReference type="PANTHER" id="PTHR11063:SF8">
    <property type="entry name" value="DELTA-1-PYRROLINE-5-CARBOXYLATE SYNTHASE"/>
    <property type="match status" value="1"/>
</dbReference>
<dbReference type="PANTHER" id="PTHR11063">
    <property type="entry name" value="GLUTAMATE SEMIALDEHYDE DEHYDROGENASE"/>
    <property type="match status" value="1"/>
</dbReference>
<dbReference type="Pfam" id="PF00171">
    <property type="entry name" value="Aldedh"/>
    <property type="match status" value="1"/>
</dbReference>
<dbReference type="PIRSF" id="PIRSF000151">
    <property type="entry name" value="GPR"/>
    <property type="match status" value="1"/>
</dbReference>
<dbReference type="SUPFAM" id="SSF53720">
    <property type="entry name" value="ALDH-like"/>
    <property type="match status" value="1"/>
</dbReference>
<dbReference type="PROSITE" id="PS01223">
    <property type="entry name" value="PROA"/>
    <property type="match status" value="1"/>
</dbReference>
<comment type="function">
    <text evidence="1">Catalyzes the NADPH-dependent reduction of L-glutamate 5-phosphate into L-glutamate 5-semialdehyde and phosphate. The product spontaneously undergoes cyclization to form 1-pyrroline-5-carboxylate.</text>
</comment>
<comment type="catalytic activity">
    <reaction evidence="1">
        <text>L-glutamate 5-semialdehyde + phosphate + NADP(+) = L-glutamyl 5-phosphate + NADPH + H(+)</text>
        <dbReference type="Rhea" id="RHEA:19541"/>
        <dbReference type="ChEBI" id="CHEBI:15378"/>
        <dbReference type="ChEBI" id="CHEBI:43474"/>
        <dbReference type="ChEBI" id="CHEBI:57783"/>
        <dbReference type="ChEBI" id="CHEBI:58066"/>
        <dbReference type="ChEBI" id="CHEBI:58274"/>
        <dbReference type="ChEBI" id="CHEBI:58349"/>
        <dbReference type="EC" id="1.2.1.41"/>
    </reaction>
</comment>
<comment type="pathway">
    <text evidence="1">Amino-acid biosynthesis; L-proline biosynthesis; L-glutamate 5-semialdehyde from L-glutamate: step 2/2.</text>
</comment>
<comment type="subcellular location">
    <subcellularLocation>
        <location evidence="1">Cytoplasm</location>
    </subcellularLocation>
</comment>
<comment type="similarity">
    <text evidence="1">Belongs to the gamma-glutamyl phosphate reductase family.</text>
</comment>
<gene>
    <name evidence="1" type="primary">proA</name>
    <name type="ordered locus">SeSA_A0372</name>
</gene>
<organism>
    <name type="scientific">Salmonella schwarzengrund (strain CVM19633)</name>
    <dbReference type="NCBI Taxonomy" id="439843"/>
    <lineage>
        <taxon>Bacteria</taxon>
        <taxon>Pseudomonadati</taxon>
        <taxon>Pseudomonadota</taxon>
        <taxon>Gammaproteobacteria</taxon>
        <taxon>Enterobacterales</taxon>
        <taxon>Enterobacteriaceae</taxon>
        <taxon>Salmonella</taxon>
    </lineage>
</organism>
<sequence length="416" mass="44669">MLEQMGIAAKAASYKLALLSSCEKNRVLEKIADELEAQMESILSANVQDVEQARANGLSEAMLDRLALTPARLKAIADDVRQVCNLADPVGQVIDGGLLDSGLRLERRRVPLGVVGVIYEARPNVTVDVASLCLKTGNAVILRGGKETHRTNAATVRVIQKALKACGLPEAAVQAIDNPDRSLVNEMLRMDKYIDMLIPRGGAGLHKLCREQSTIPVITGGIGVCHIFVDSSADIAPALKIIVNAKTQRPSTCNTVETLLVHQDIAERFLPVLSKQMAESGVTLHGDETVMQALHGPAKLVPLKPEELDNEFLSLDLNVVVVENMDGAIAHIREHGTQHSDAILTSDMHNAARFVNEVDSAAVYVNASTRFTDGGQFGLGAEVAVSTQKLHARGPMGLEALTTYKWIGFGDGTIRA</sequence>
<feature type="chain" id="PRO_1000193652" description="Gamma-glutamyl phosphate reductase">
    <location>
        <begin position="1"/>
        <end position="416"/>
    </location>
</feature>
<protein>
    <recommendedName>
        <fullName evidence="1">Gamma-glutamyl phosphate reductase</fullName>
        <shortName evidence="1">GPR</shortName>
        <ecNumber evidence="1">1.2.1.41</ecNumber>
    </recommendedName>
    <alternativeName>
        <fullName evidence="1">Glutamate-5-semialdehyde dehydrogenase</fullName>
    </alternativeName>
    <alternativeName>
        <fullName evidence="1">Glutamyl-gamma-semialdehyde dehydrogenase</fullName>
        <shortName evidence="1">GSA dehydrogenase</shortName>
    </alternativeName>
</protein>
<reference key="1">
    <citation type="journal article" date="2011" name="J. Bacteriol.">
        <title>Comparative genomics of 28 Salmonella enterica isolates: evidence for CRISPR-mediated adaptive sublineage evolution.</title>
        <authorList>
            <person name="Fricke W.F."/>
            <person name="Mammel M.K."/>
            <person name="McDermott P.F."/>
            <person name="Tartera C."/>
            <person name="White D.G."/>
            <person name="Leclerc J.E."/>
            <person name="Ravel J."/>
            <person name="Cebula T.A."/>
        </authorList>
    </citation>
    <scope>NUCLEOTIDE SEQUENCE [LARGE SCALE GENOMIC DNA]</scope>
    <source>
        <strain>CVM19633</strain>
    </source>
</reference>
<evidence type="ECO:0000255" key="1">
    <source>
        <dbReference type="HAMAP-Rule" id="MF_00412"/>
    </source>
</evidence>
<name>PROA_SALSV</name>